<proteinExistence type="evidence at transcript level"/>
<dbReference type="EC" id="1.5.5.2" evidence="2"/>
<dbReference type="EMBL" id="BX284604">
    <property type="protein sequence ID" value="CAB05117.2"/>
    <property type="molecule type" value="Genomic_DNA"/>
</dbReference>
<dbReference type="EMBL" id="BX284604">
    <property type="protein sequence ID" value="CDR32778.1"/>
    <property type="molecule type" value="Genomic_DNA"/>
</dbReference>
<dbReference type="PIR" id="T18776">
    <property type="entry name" value="T18776"/>
</dbReference>
<dbReference type="RefSeq" id="NP_001293995.1">
    <property type="nucleotide sequence ID" value="NM_001307066.1"/>
</dbReference>
<dbReference type="RefSeq" id="NP_001368485.1">
    <molecule id="O45228-2"/>
    <property type="nucleotide sequence ID" value="NM_001380524.1"/>
</dbReference>
<dbReference type="RefSeq" id="NP_502669.2">
    <molecule id="O45228-1"/>
    <property type="nucleotide sequence ID" value="NM_070268.7"/>
</dbReference>
<dbReference type="BioGRID" id="43434">
    <property type="interactions" value="1"/>
</dbReference>
<dbReference type="FunCoup" id="O45228">
    <property type="interactions" value="685"/>
</dbReference>
<dbReference type="STRING" id="6239.B0513.5a.1"/>
<dbReference type="iPTMnet" id="O45228"/>
<dbReference type="PaxDb" id="6239-B0513.5"/>
<dbReference type="PeptideAtlas" id="O45228"/>
<dbReference type="EnsemblMetazoa" id="B0513.5a.1">
    <molecule id="O45228-1"/>
    <property type="protein sequence ID" value="B0513.5a.1"/>
    <property type="gene ID" value="WBGene00007197"/>
</dbReference>
<dbReference type="EnsemblMetazoa" id="B0513.5b.1">
    <molecule id="O45228-2"/>
    <property type="protein sequence ID" value="B0513.5b.1"/>
    <property type="gene ID" value="WBGene00007197"/>
</dbReference>
<dbReference type="GeneID" id="178350"/>
<dbReference type="KEGG" id="cel:CELE_B0513.5"/>
<dbReference type="UCSC" id="B0513.5">
    <molecule id="O45228-1"/>
    <property type="organism name" value="c. elegans"/>
</dbReference>
<dbReference type="AGR" id="WB:WBGene00007197"/>
<dbReference type="CTD" id="178350"/>
<dbReference type="WormBase" id="B0513.5a">
    <molecule id="O45228-1"/>
    <property type="protein sequence ID" value="CE37309"/>
    <property type="gene ID" value="WBGene00007197"/>
    <property type="gene designation" value="prdh-1"/>
</dbReference>
<dbReference type="WormBase" id="B0513.5b">
    <molecule id="O45228-2"/>
    <property type="protein sequence ID" value="CE49937"/>
    <property type="gene ID" value="WBGene00007197"/>
    <property type="gene designation" value="prdh-1"/>
</dbReference>
<dbReference type="eggNOG" id="KOG0186">
    <property type="taxonomic scope" value="Eukaryota"/>
</dbReference>
<dbReference type="GeneTree" id="ENSGT00390000006265"/>
<dbReference type="HOGENOM" id="CLU_018202_3_1_1"/>
<dbReference type="InParanoid" id="O45228"/>
<dbReference type="OMA" id="GPLKKYH"/>
<dbReference type="OrthoDB" id="5464at2759"/>
<dbReference type="PhylomeDB" id="O45228"/>
<dbReference type="Reactome" id="R-CEL-389661">
    <property type="pathway name" value="Glyoxylate metabolism and glycine degradation"/>
</dbReference>
<dbReference type="Reactome" id="R-CEL-70688">
    <property type="pathway name" value="Proline catabolism"/>
</dbReference>
<dbReference type="UniPathway" id="UPA00261">
    <property type="reaction ID" value="UER00373"/>
</dbReference>
<dbReference type="PRO" id="PR:O45228"/>
<dbReference type="Proteomes" id="UP000001940">
    <property type="component" value="Chromosome IV"/>
</dbReference>
<dbReference type="Bgee" id="WBGene00007197">
    <property type="expression patterns" value="Expressed in larva and 3 other cell types or tissues"/>
</dbReference>
<dbReference type="GO" id="GO:0005759">
    <property type="term" value="C:mitochondrial matrix"/>
    <property type="evidence" value="ECO:0007669"/>
    <property type="project" value="UniProtKB-SubCell"/>
</dbReference>
<dbReference type="GO" id="GO:0005739">
    <property type="term" value="C:mitochondrion"/>
    <property type="evidence" value="ECO:0000318"/>
    <property type="project" value="GO_Central"/>
</dbReference>
<dbReference type="GO" id="GO:0071949">
    <property type="term" value="F:FAD binding"/>
    <property type="evidence" value="ECO:0000250"/>
    <property type="project" value="UniProtKB"/>
</dbReference>
<dbReference type="GO" id="GO:0004657">
    <property type="term" value="F:proline dehydrogenase activity"/>
    <property type="evidence" value="ECO:0000250"/>
    <property type="project" value="UniProtKB"/>
</dbReference>
<dbReference type="GO" id="GO:0010133">
    <property type="term" value="P:proline catabolic process to glutamate"/>
    <property type="evidence" value="ECO:0000318"/>
    <property type="project" value="GO_Central"/>
</dbReference>
<dbReference type="FunFam" id="3.20.20.220:FF:000012">
    <property type="entry name" value="Proline dehydrogenase"/>
    <property type="match status" value="1"/>
</dbReference>
<dbReference type="FunFam" id="3.20.20.220:FF:000035">
    <property type="entry name" value="Proline dehydrogenase"/>
    <property type="match status" value="1"/>
</dbReference>
<dbReference type="Gene3D" id="3.20.20.220">
    <property type="match status" value="2"/>
</dbReference>
<dbReference type="InterPro" id="IPR011992">
    <property type="entry name" value="EF-hand-dom_pair"/>
</dbReference>
<dbReference type="InterPro" id="IPR029041">
    <property type="entry name" value="FAD-linked_oxidoreductase-like"/>
</dbReference>
<dbReference type="InterPro" id="IPR002872">
    <property type="entry name" value="Proline_DH_dom"/>
</dbReference>
<dbReference type="InterPro" id="IPR015659">
    <property type="entry name" value="Proline_oxidase"/>
</dbReference>
<dbReference type="PANTHER" id="PTHR13914:SF0">
    <property type="entry name" value="PROLINE DEHYDROGENASE 1, MITOCHONDRIAL"/>
    <property type="match status" value="1"/>
</dbReference>
<dbReference type="PANTHER" id="PTHR13914">
    <property type="entry name" value="PROLINE OXIDASE"/>
    <property type="match status" value="1"/>
</dbReference>
<dbReference type="Pfam" id="PF01619">
    <property type="entry name" value="Pro_dh"/>
    <property type="match status" value="1"/>
</dbReference>
<dbReference type="SUPFAM" id="SSF47473">
    <property type="entry name" value="EF-hand"/>
    <property type="match status" value="1"/>
</dbReference>
<dbReference type="SUPFAM" id="SSF51730">
    <property type="entry name" value="FAD-linked oxidoreductase"/>
    <property type="match status" value="1"/>
</dbReference>
<feature type="transit peptide" description="Mitochondrion" evidence="3">
    <location>
        <begin position="1"/>
        <end status="unknown"/>
    </location>
</feature>
<feature type="chain" id="PRO_0000025802" description="Proline dehydrogenase 1, mitochondrial">
    <location>
        <begin status="unknown"/>
        <end position="616"/>
    </location>
</feature>
<feature type="splice variant" id="VSP_060478" description="In isoform b." evidence="6">
    <location>
        <begin position="1"/>
        <end position="101"/>
    </location>
</feature>
<reference key="1">
    <citation type="journal article" date="1998" name="Science">
        <title>Genome sequence of the nematode C. elegans: a platform for investigating biology.</title>
        <authorList>
            <consortium name="The C. elegans sequencing consortium"/>
        </authorList>
    </citation>
    <scope>NUCLEOTIDE SEQUENCE [LARGE SCALE GENOMIC DNA]</scope>
    <source>
        <strain>Bristol N2</strain>
    </source>
</reference>
<reference key="2">
    <citation type="journal article" date="2016" name="Cell Rep.">
        <title>Proline Catabolism Modulates Innate Immunity in Caenorhabditis elegans.</title>
        <authorList>
            <person name="Tang H."/>
            <person name="Pang S."/>
        </authorList>
    </citation>
    <scope>FUNCTION</scope>
    <scope>INDUCTION</scope>
    <scope>DISRUPTION PHENOTYPE</scope>
</reference>
<name>PROD_CAEEL</name>
<accession>O45228</accession>
<accession>A0A061AD41</accession>
<sequence length="616" mass="69823">MQAALIGLNFPLQRRFLSGVLTTTSSAKRCYSGDTGKPYDCTSAEHKKELEECYNRLDLSFENTKEAFKSKSNTELVRALVVLRLCGIQTLVNQNQIILNTMRRVLGKNLFKKTLKNTFFGHFVAGETEEEVRHVVEKLRNYGVKSILDYSVEADITSQEATDKTVKGTSVATVKPAAMTPVVDAKTLETTRERYTVHEEFGDRRQGVSSARTYFYEGEEQCDKNRDIFKDSINAVASATKNEGFVAVKITALGRPQLLLKLSEAIVQTQNFFKALTGGMSLQEGRLTSQEFYKRLGELGVKTDTESVKKFFDEVDFDSDGIVDLHGWNHILDDHVKLGQLFQVLNIKTGSLEPLIQNLSNEEEQEFRNMVRRTLDVAEYAIEKGVRIMVDAEQTYLQPAISKITIEMMKKYNKGRGNIFNTYQAYLKGTLQNMEADMQVARREGWHFGAKLVRGAYMEQERARAKAIGYEDPINDNFEATSKMYESCLTRIADEVHRRGKTNVSVMVASHNEDTVRFALNLMKEKCISPSERVMCMAQLYGMCDQVSFSLGQAGFSVYKYLPYGPVEEVLPYLSRRALENGSVLKKANKERDLLWKELKRRISSGEFKARSSSSS</sequence>
<comment type="function">
    <text evidence="2 4">Converts proline to delta-1-pyrroline-5-carboxylate (By similarity). Through proline catabolism, promotes reactive oxygen species (ROS) production and the transcription of skn-1 target genes in response to bacterial infection by P.aeruginosa (PubMed:27974198).</text>
</comment>
<comment type="catalytic activity">
    <reaction evidence="2">
        <text>L-proline + a quinone = (S)-1-pyrroline-5-carboxylate + a quinol + H(+)</text>
        <dbReference type="Rhea" id="RHEA:23784"/>
        <dbReference type="ChEBI" id="CHEBI:15378"/>
        <dbReference type="ChEBI" id="CHEBI:17388"/>
        <dbReference type="ChEBI" id="CHEBI:24646"/>
        <dbReference type="ChEBI" id="CHEBI:60039"/>
        <dbReference type="ChEBI" id="CHEBI:132124"/>
        <dbReference type="EC" id="1.5.5.2"/>
    </reaction>
</comment>
<comment type="cofactor">
    <cofactor evidence="2">
        <name>FAD</name>
        <dbReference type="ChEBI" id="CHEBI:57692"/>
    </cofactor>
</comment>
<comment type="pathway">
    <text>Amino-acid degradation; L-proline degradation into L-glutamate; L-glutamate from L-proline: step 1/2.</text>
</comment>
<comment type="subcellular location">
    <subcellularLocation>
        <location evidence="1">Mitochondrion matrix</location>
    </subcellularLocation>
</comment>
<comment type="alternative products">
    <event type="alternative splicing"/>
    <isoform>
        <id>O45228-1</id>
        <name evidence="7">a</name>
        <sequence type="displayed"/>
    </isoform>
    <isoform>
        <id>O45228-2</id>
        <name evidence="8">b</name>
        <sequence type="described" ref="VSP_060478"/>
    </isoform>
</comment>
<comment type="induction">
    <text evidence="4">Up-regulated by infection with P.aeruginosa.</text>
</comment>
<comment type="disruption phenotype">
    <text evidence="4">RNAi-mediated knockdown reduces the survival incidence, results in increased bacterial load and reduces ROS production following infection by P.aeruginosa (PubMed:27974198). RNAi-mediated knockdown inhibits the nuclear accumulation of the transcription factor skn-1 and reduces the expression of skn-1 transcriptional targets including gst-4 following infection by P.aeruginosa (PubMed:27974198). RNAi-mediated knockdown suppresses the pro-survival effects of the addition of exogenous proline following infection by P.aeruginosa (PubMed:27974198).</text>
</comment>
<comment type="similarity">
    <text evidence="6">Belongs to the proline oxidase family.</text>
</comment>
<evidence type="ECO:0000250" key="1"/>
<evidence type="ECO:0000250" key="2">
    <source>
        <dbReference type="UniProtKB" id="O43272"/>
    </source>
</evidence>
<evidence type="ECO:0000255" key="3"/>
<evidence type="ECO:0000269" key="4">
    <source>
    </source>
</evidence>
<evidence type="ECO:0000303" key="5">
    <source>
    </source>
</evidence>
<evidence type="ECO:0000305" key="6"/>
<evidence type="ECO:0000312" key="7">
    <source>
        <dbReference type="WormBase" id="B0513.5a"/>
    </source>
</evidence>
<evidence type="ECO:0000312" key="8">
    <source>
        <dbReference type="WormBase" id="B0513.5b"/>
    </source>
</evidence>
<gene>
    <name evidence="7" type="primary">prdh-1</name>
    <name evidence="5" type="synonym">prodh</name>
    <name evidence="7" type="ORF">B0513.5</name>
</gene>
<protein>
    <recommendedName>
        <fullName>Proline dehydrogenase 1, mitochondrial</fullName>
        <ecNumber evidence="2">1.5.5.2</ecNumber>
    </recommendedName>
    <alternativeName>
        <fullName>Proline oxidase</fullName>
    </alternativeName>
</protein>
<keyword id="KW-0025">Alternative splicing</keyword>
<keyword id="KW-0274">FAD</keyword>
<keyword id="KW-0285">Flavoprotein</keyword>
<keyword id="KW-0496">Mitochondrion</keyword>
<keyword id="KW-0560">Oxidoreductase</keyword>
<keyword id="KW-0642">Proline metabolism</keyword>
<keyword id="KW-1185">Reference proteome</keyword>
<keyword id="KW-0809">Transit peptide</keyword>
<organism>
    <name type="scientific">Caenorhabditis elegans</name>
    <dbReference type="NCBI Taxonomy" id="6239"/>
    <lineage>
        <taxon>Eukaryota</taxon>
        <taxon>Metazoa</taxon>
        <taxon>Ecdysozoa</taxon>
        <taxon>Nematoda</taxon>
        <taxon>Chromadorea</taxon>
        <taxon>Rhabditida</taxon>
        <taxon>Rhabditina</taxon>
        <taxon>Rhabditomorpha</taxon>
        <taxon>Rhabditoidea</taxon>
        <taxon>Rhabditidae</taxon>
        <taxon>Peloderinae</taxon>
        <taxon>Caenorhabditis</taxon>
    </lineage>
</organism>